<name>HLDE_ECOSE</name>
<comment type="function">
    <text evidence="1">Catalyzes the phosphorylation of D-glycero-D-manno-heptose 7-phosphate at the C-1 position to selectively form D-glycero-beta-D-manno-heptose-1,7-bisphosphate.</text>
</comment>
<comment type="function">
    <text evidence="1">Catalyzes the ADP transfer from ATP to D-glycero-beta-D-manno-heptose 1-phosphate, yielding ADP-D-glycero-beta-D-manno-heptose.</text>
</comment>
<comment type="catalytic activity">
    <reaction evidence="1">
        <text>D-glycero-beta-D-manno-heptose 7-phosphate + ATP = D-glycero-beta-D-manno-heptose 1,7-bisphosphate + ADP + H(+)</text>
        <dbReference type="Rhea" id="RHEA:27473"/>
        <dbReference type="ChEBI" id="CHEBI:15378"/>
        <dbReference type="ChEBI" id="CHEBI:30616"/>
        <dbReference type="ChEBI" id="CHEBI:60204"/>
        <dbReference type="ChEBI" id="CHEBI:60208"/>
        <dbReference type="ChEBI" id="CHEBI:456216"/>
        <dbReference type="EC" id="2.7.1.167"/>
    </reaction>
</comment>
<comment type="catalytic activity">
    <reaction evidence="1">
        <text>D-glycero-beta-D-manno-heptose 1-phosphate + ATP + H(+) = ADP-D-glycero-beta-D-manno-heptose + diphosphate</text>
        <dbReference type="Rhea" id="RHEA:27465"/>
        <dbReference type="ChEBI" id="CHEBI:15378"/>
        <dbReference type="ChEBI" id="CHEBI:30616"/>
        <dbReference type="ChEBI" id="CHEBI:33019"/>
        <dbReference type="ChEBI" id="CHEBI:59967"/>
        <dbReference type="ChEBI" id="CHEBI:61593"/>
        <dbReference type="EC" id="2.7.7.70"/>
    </reaction>
</comment>
<comment type="pathway">
    <text evidence="1">Nucleotide-sugar biosynthesis; ADP-L-glycero-beta-D-manno-heptose biosynthesis; ADP-L-glycero-beta-D-manno-heptose from D-glycero-beta-D-manno-heptose 7-phosphate: step 1/4.</text>
</comment>
<comment type="pathway">
    <text evidence="1">Nucleotide-sugar biosynthesis; ADP-L-glycero-beta-D-manno-heptose biosynthesis; ADP-L-glycero-beta-D-manno-heptose from D-glycero-beta-D-manno-heptose 7-phosphate: step 3/4.</text>
</comment>
<comment type="subunit">
    <text evidence="1">Homodimer.</text>
</comment>
<comment type="similarity">
    <text evidence="1">In the N-terminal section; belongs to the carbohydrate kinase PfkB family.</text>
</comment>
<comment type="similarity">
    <text evidence="1">In the C-terminal section; belongs to the cytidylyltransferase family.</text>
</comment>
<keyword id="KW-0007">Acetylation</keyword>
<keyword id="KW-0067">ATP-binding</keyword>
<keyword id="KW-0119">Carbohydrate metabolism</keyword>
<keyword id="KW-0418">Kinase</keyword>
<keyword id="KW-0511">Multifunctional enzyme</keyword>
<keyword id="KW-0547">Nucleotide-binding</keyword>
<keyword id="KW-0548">Nucleotidyltransferase</keyword>
<keyword id="KW-0808">Transferase</keyword>
<sequence length="477" mass="51051">MKVTLPEFERAGVMVVGDVMLDRYWYGPTSRISPEAPVPVVKVNTIEERPGGAANVAMNIASLGANARLVGLTGIDDAARALSKSLADVNVKCDFVSVPTHPTITKLRVLSRNQQLIRLDFEEGFEGVDPQPLHERINQALSSIGALVLSDYAKGALASVQQMIQLARKAGVPVLIDPKGTDFERYRGATLLTPNLSEFEAVVGKCKTEEEIVERGMKLIADYELSALLVTRSEQGMSLLQPGKAPLHMPTQAQEVYDVTGAGDTVIGVLAATLAAGNSLEEACFFANAAAGVVVGKLGTSTVSPIELENAVRGRADTGFGVMTEEELKLAVAAARKRGEKVVMTNGVFDILHAGHVSYLANARKLGDRLIVAVNSDASTKRLKGDSRPVNPLEQRMIVLGALEAVDWVVSFEEDTPQRLIAGILPDLLVKGGDYKPEEIAGSKEVWANGGEVLVLNFEDGCSTTNIIKKIQQDKKG</sequence>
<accession>B6I423</accession>
<reference key="1">
    <citation type="journal article" date="2008" name="DNA Res.">
        <title>Complete genome sequence and comparative analysis of the wild-type commensal Escherichia coli strain SE11 isolated from a healthy adult.</title>
        <authorList>
            <person name="Oshima K."/>
            <person name="Toh H."/>
            <person name="Ogura Y."/>
            <person name="Sasamoto H."/>
            <person name="Morita H."/>
            <person name="Park S.-H."/>
            <person name="Ooka T."/>
            <person name="Iyoda S."/>
            <person name="Taylor T.D."/>
            <person name="Hayashi T."/>
            <person name="Itoh K."/>
            <person name="Hattori M."/>
        </authorList>
    </citation>
    <scope>NUCLEOTIDE SEQUENCE [LARGE SCALE GENOMIC DNA]</scope>
    <source>
        <strain>SE11</strain>
    </source>
</reference>
<proteinExistence type="inferred from homology"/>
<feature type="chain" id="PRO_1000185809" description="Bifunctional protein HldE">
    <location>
        <begin position="1"/>
        <end position="477"/>
    </location>
</feature>
<feature type="region of interest" description="Ribokinase">
    <location>
        <begin position="1"/>
        <end position="318"/>
    </location>
</feature>
<feature type="region of interest" description="Cytidylyltransferase">
    <location>
        <begin position="344"/>
        <end position="477"/>
    </location>
</feature>
<feature type="active site" evidence="1">
    <location>
        <position position="264"/>
    </location>
</feature>
<feature type="binding site" evidence="1">
    <location>
        <begin position="195"/>
        <end position="198"/>
    </location>
    <ligand>
        <name>ATP</name>
        <dbReference type="ChEBI" id="CHEBI:30616"/>
    </ligand>
</feature>
<feature type="modified residue" description="N6-acetyllysine" evidence="1">
    <location>
        <position position="179"/>
    </location>
</feature>
<protein>
    <recommendedName>
        <fullName evidence="1">Bifunctional protein HldE</fullName>
    </recommendedName>
    <domain>
        <recommendedName>
            <fullName evidence="1">D-beta-D-heptose 7-phosphate kinase</fullName>
            <ecNumber evidence="1">2.7.1.167</ecNumber>
        </recommendedName>
        <alternativeName>
            <fullName evidence="1">D-beta-D-heptose 7-phosphotransferase</fullName>
        </alternativeName>
        <alternativeName>
            <fullName evidence="1">D-glycero-beta-D-manno-heptose-7-phosphate kinase</fullName>
        </alternativeName>
    </domain>
    <domain>
        <recommendedName>
            <fullName evidence="1">D-beta-D-heptose 1-phosphate adenylyltransferase</fullName>
            <ecNumber evidence="1">2.7.7.70</ecNumber>
        </recommendedName>
        <alternativeName>
            <fullName evidence="1">D-glycero-beta-D-manno-heptose 1-phosphate adenylyltransferase</fullName>
        </alternativeName>
    </domain>
</protein>
<evidence type="ECO:0000255" key="1">
    <source>
        <dbReference type="HAMAP-Rule" id="MF_01603"/>
    </source>
</evidence>
<gene>
    <name evidence="1" type="primary">hldE</name>
    <name type="ordered locus">ECSE_3332</name>
</gene>
<dbReference type="EC" id="2.7.1.167" evidence="1"/>
<dbReference type="EC" id="2.7.7.70" evidence="1"/>
<dbReference type="EMBL" id="AP009240">
    <property type="protein sequence ID" value="BAG78856.1"/>
    <property type="molecule type" value="Genomic_DNA"/>
</dbReference>
<dbReference type="RefSeq" id="WP_000869178.1">
    <property type="nucleotide sequence ID" value="NC_011415.1"/>
</dbReference>
<dbReference type="SMR" id="B6I423"/>
<dbReference type="GeneID" id="75205361"/>
<dbReference type="KEGG" id="ecy:ECSE_3332"/>
<dbReference type="HOGENOM" id="CLU_021150_2_1_6"/>
<dbReference type="UniPathway" id="UPA00356">
    <property type="reaction ID" value="UER00437"/>
</dbReference>
<dbReference type="UniPathway" id="UPA00356">
    <property type="reaction ID" value="UER00439"/>
</dbReference>
<dbReference type="Proteomes" id="UP000008199">
    <property type="component" value="Chromosome"/>
</dbReference>
<dbReference type="GO" id="GO:0005829">
    <property type="term" value="C:cytosol"/>
    <property type="evidence" value="ECO:0007669"/>
    <property type="project" value="TreeGrafter"/>
</dbReference>
<dbReference type="GO" id="GO:0005524">
    <property type="term" value="F:ATP binding"/>
    <property type="evidence" value="ECO:0007669"/>
    <property type="project" value="UniProtKB-UniRule"/>
</dbReference>
<dbReference type="GO" id="GO:0033785">
    <property type="term" value="F:heptose 7-phosphate kinase activity"/>
    <property type="evidence" value="ECO:0007669"/>
    <property type="project" value="UniProtKB-UniRule"/>
</dbReference>
<dbReference type="GO" id="GO:0033786">
    <property type="term" value="F:heptose-1-phosphate adenylyltransferase activity"/>
    <property type="evidence" value="ECO:0007669"/>
    <property type="project" value="UniProtKB-UniRule"/>
</dbReference>
<dbReference type="GO" id="GO:0016773">
    <property type="term" value="F:phosphotransferase activity, alcohol group as acceptor"/>
    <property type="evidence" value="ECO:0007669"/>
    <property type="project" value="InterPro"/>
</dbReference>
<dbReference type="GO" id="GO:0097171">
    <property type="term" value="P:ADP-L-glycero-beta-D-manno-heptose biosynthetic process"/>
    <property type="evidence" value="ECO:0007669"/>
    <property type="project" value="UniProtKB-UniPathway"/>
</dbReference>
<dbReference type="CDD" id="cd01172">
    <property type="entry name" value="RfaE_like"/>
    <property type="match status" value="1"/>
</dbReference>
<dbReference type="FunFam" id="3.40.1190.20:FF:000002">
    <property type="entry name" value="Bifunctional protein HldE"/>
    <property type="match status" value="1"/>
</dbReference>
<dbReference type="FunFam" id="3.40.50.620:FF:000028">
    <property type="entry name" value="Bifunctional protein HldE"/>
    <property type="match status" value="1"/>
</dbReference>
<dbReference type="Gene3D" id="3.40.1190.20">
    <property type="match status" value="1"/>
</dbReference>
<dbReference type="Gene3D" id="3.40.50.620">
    <property type="entry name" value="HUPs"/>
    <property type="match status" value="1"/>
</dbReference>
<dbReference type="HAMAP" id="MF_01603">
    <property type="entry name" value="HldE"/>
    <property type="match status" value="1"/>
</dbReference>
<dbReference type="InterPro" id="IPR023030">
    <property type="entry name" value="Bifunc_HldE"/>
</dbReference>
<dbReference type="InterPro" id="IPR002173">
    <property type="entry name" value="Carboh/pur_kinase_PfkB_CS"/>
</dbReference>
<dbReference type="InterPro" id="IPR004821">
    <property type="entry name" value="Cyt_trans-like"/>
</dbReference>
<dbReference type="InterPro" id="IPR011611">
    <property type="entry name" value="PfkB_dom"/>
</dbReference>
<dbReference type="InterPro" id="IPR011913">
    <property type="entry name" value="RfaE_dom_I"/>
</dbReference>
<dbReference type="InterPro" id="IPR011914">
    <property type="entry name" value="RfaE_dom_II"/>
</dbReference>
<dbReference type="InterPro" id="IPR029056">
    <property type="entry name" value="Ribokinase-like"/>
</dbReference>
<dbReference type="InterPro" id="IPR014729">
    <property type="entry name" value="Rossmann-like_a/b/a_fold"/>
</dbReference>
<dbReference type="NCBIfam" id="TIGR00125">
    <property type="entry name" value="cyt_tran_rel"/>
    <property type="match status" value="1"/>
</dbReference>
<dbReference type="NCBIfam" id="NF008454">
    <property type="entry name" value="PRK11316.1"/>
    <property type="match status" value="1"/>
</dbReference>
<dbReference type="NCBIfam" id="TIGR02198">
    <property type="entry name" value="rfaE_dom_I"/>
    <property type="match status" value="1"/>
</dbReference>
<dbReference type="NCBIfam" id="TIGR02199">
    <property type="entry name" value="rfaE_dom_II"/>
    <property type="match status" value="1"/>
</dbReference>
<dbReference type="PANTHER" id="PTHR46969">
    <property type="entry name" value="BIFUNCTIONAL PROTEIN HLDE"/>
    <property type="match status" value="1"/>
</dbReference>
<dbReference type="PANTHER" id="PTHR46969:SF1">
    <property type="entry name" value="BIFUNCTIONAL PROTEIN HLDE"/>
    <property type="match status" value="1"/>
</dbReference>
<dbReference type="Pfam" id="PF01467">
    <property type="entry name" value="CTP_transf_like"/>
    <property type="match status" value="1"/>
</dbReference>
<dbReference type="Pfam" id="PF00294">
    <property type="entry name" value="PfkB"/>
    <property type="match status" value="1"/>
</dbReference>
<dbReference type="SUPFAM" id="SSF52374">
    <property type="entry name" value="Nucleotidylyl transferase"/>
    <property type="match status" value="1"/>
</dbReference>
<dbReference type="SUPFAM" id="SSF53613">
    <property type="entry name" value="Ribokinase-like"/>
    <property type="match status" value="1"/>
</dbReference>
<dbReference type="PROSITE" id="PS00583">
    <property type="entry name" value="PFKB_KINASES_1"/>
    <property type="match status" value="1"/>
</dbReference>
<organism>
    <name type="scientific">Escherichia coli (strain SE11)</name>
    <dbReference type="NCBI Taxonomy" id="409438"/>
    <lineage>
        <taxon>Bacteria</taxon>
        <taxon>Pseudomonadati</taxon>
        <taxon>Pseudomonadota</taxon>
        <taxon>Gammaproteobacteria</taxon>
        <taxon>Enterobacterales</taxon>
        <taxon>Enterobacteriaceae</taxon>
        <taxon>Escherichia</taxon>
    </lineage>
</organism>